<accession>Q0A653</accession>
<protein>
    <recommendedName>
        <fullName evidence="1">Sulfate adenylyltransferase subunit 2 2</fullName>
        <ecNumber evidence="1">2.7.7.4</ecNumber>
    </recommendedName>
    <alternativeName>
        <fullName evidence="1">ATP-sulfurylase small subunit 2</fullName>
    </alternativeName>
    <alternativeName>
        <fullName evidence="1">Sulfate adenylate transferase 2</fullName>
        <shortName evidence="1">SAT 2</shortName>
    </alternativeName>
</protein>
<comment type="function">
    <text evidence="1">With CysN forms the ATP sulfurylase (ATPS) that catalyzes the adenylation of sulfate producing adenosine 5'-phosphosulfate (APS) and diphosphate, the first enzymatic step in sulfur assimilation pathway. APS synthesis involves the formation of a high-energy phosphoric-sulfuric acid anhydride bond driven by GTP hydrolysis by CysN coupled to ATP hydrolysis by CysD.</text>
</comment>
<comment type="catalytic activity">
    <reaction evidence="1">
        <text>sulfate + ATP + H(+) = adenosine 5'-phosphosulfate + diphosphate</text>
        <dbReference type="Rhea" id="RHEA:18133"/>
        <dbReference type="ChEBI" id="CHEBI:15378"/>
        <dbReference type="ChEBI" id="CHEBI:16189"/>
        <dbReference type="ChEBI" id="CHEBI:30616"/>
        <dbReference type="ChEBI" id="CHEBI:33019"/>
        <dbReference type="ChEBI" id="CHEBI:58243"/>
        <dbReference type="EC" id="2.7.7.4"/>
    </reaction>
</comment>
<comment type="pathway">
    <text evidence="1">Sulfur metabolism; hydrogen sulfide biosynthesis; sulfite from sulfate: step 1/3.</text>
</comment>
<comment type="subunit">
    <text evidence="1">Heterodimer composed of CysD, the smaller subunit, and CysN.</text>
</comment>
<comment type="similarity">
    <text evidence="1">Belongs to the PAPS reductase family. CysD subfamily.</text>
</comment>
<organism>
    <name type="scientific">Alkalilimnicola ehrlichii (strain ATCC BAA-1101 / DSM 17681 / MLHE-1)</name>
    <dbReference type="NCBI Taxonomy" id="187272"/>
    <lineage>
        <taxon>Bacteria</taxon>
        <taxon>Pseudomonadati</taxon>
        <taxon>Pseudomonadota</taxon>
        <taxon>Gammaproteobacteria</taxon>
        <taxon>Chromatiales</taxon>
        <taxon>Ectothiorhodospiraceae</taxon>
        <taxon>Alkalilimnicola</taxon>
    </lineage>
</organism>
<dbReference type="EC" id="2.7.7.4" evidence="1"/>
<dbReference type="EMBL" id="CP000453">
    <property type="protein sequence ID" value="ABI57684.1"/>
    <property type="molecule type" value="Genomic_DNA"/>
</dbReference>
<dbReference type="RefSeq" id="WP_011630077.1">
    <property type="nucleotide sequence ID" value="NC_008340.1"/>
</dbReference>
<dbReference type="SMR" id="Q0A653"/>
<dbReference type="KEGG" id="aeh:Mlg_2344"/>
<dbReference type="eggNOG" id="COG0175">
    <property type="taxonomic scope" value="Bacteria"/>
</dbReference>
<dbReference type="HOGENOM" id="CLU_043026_0_0_6"/>
<dbReference type="OrthoDB" id="9772604at2"/>
<dbReference type="UniPathway" id="UPA00140">
    <property type="reaction ID" value="UER00204"/>
</dbReference>
<dbReference type="Proteomes" id="UP000001962">
    <property type="component" value="Chromosome"/>
</dbReference>
<dbReference type="GO" id="GO:0005524">
    <property type="term" value="F:ATP binding"/>
    <property type="evidence" value="ECO:0007669"/>
    <property type="project" value="UniProtKB-KW"/>
</dbReference>
<dbReference type="GO" id="GO:0004781">
    <property type="term" value="F:sulfate adenylyltransferase (ATP) activity"/>
    <property type="evidence" value="ECO:0007669"/>
    <property type="project" value="UniProtKB-UniRule"/>
</dbReference>
<dbReference type="GO" id="GO:0070814">
    <property type="term" value="P:hydrogen sulfide biosynthetic process"/>
    <property type="evidence" value="ECO:0007669"/>
    <property type="project" value="UniProtKB-UniRule"/>
</dbReference>
<dbReference type="GO" id="GO:0000103">
    <property type="term" value="P:sulfate assimilation"/>
    <property type="evidence" value="ECO:0007669"/>
    <property type="project" value="UniProtKB-UniRule"/>
</dbReference>
<dbReference type="CDD" id="cd23946">
    <property type="entry name" value="Sulfate_adenylyltransferase_2"/>
    <property type="match status" value="1"/>
</dbReference>
<dbReference type="FunFam" id="3.40.50.620:FF:000002">
    <property type="entry name" value="Sulfate adenylyltransferase subunit 2"/>
    <property type="match status" value="1"/>
</dbReference>
<dbReference type="Gene3D" id="3.40.50.620">
    <property type="entry name" value="HUPs"/>
    <property type="match status" value="1"/>
</dbReference>
<dbReference type="HAMAP" id="MF_00064">
    <property type="entry name" value="Sulf_adenylyltr_sub2"/>
    <property type="match status" value="1"/>
</dbReference>
<dbReference type="InterPro" id="IPR002500">
    <property type="entry name" value="PAPS_reduct_dom"/>
</dbReference>
<dbReference type="InterPro" id="IPR014729">
    <property type="entry name" value="Rossmann-like_a/b/a_fold"/>
</dbReference>
<dbReference type="InterPro" id="IPR011784">
    <property type="entry name" value="SO4_adenylTrfase_ssu"/>
</dbReference>
<dbReference type="InterPro" id="IPR050128">
    <property type="entry name" value="Sulfate_adenylyltrnsfr_sub2"/>
</dbReference>
<dbReference type="NCBIfam" id="TIGR02039">
    <property type="entry name" value="CysD"/>
    <property type="match status" value="1"/>
</dbReference>
<dbReference type="NCBIfam" id="NF003587">
    <property type="entry name" value="PRK05253.1"/>
    <property type="match status" value="1"/>
</dbReference>
<dbReference type="NCBIfam" id="NF009214">
    <property type="entry name" value="PRK12563.1"/>
    <property type="match status" value="1"/>
</dbReference>
<dbReference type="PANTHER" id="PTHR43196">
    <property type="entry name" value="SULFATE ADENYLYLTRANSFERASE SUBUNIT 2"/>
    <property type="match status" value="1"/>
</dbReference>
<dbReference type="PANTHER" id="PTHR43196:SF1">
    <property type="entry name" value="SULFATE ADENYLYLTRANSFERASE SUBUNIT 2"/>
    <property type="match status" value="1"/>
</dbReference>
<dbReference type="Pfam" id="PF01507">
    <property type="entry name" value="PAPS_reduct"/>
    <property type="match status" value="1"/>
</dbReference>
<dbReference type="PIRSF" id="PIRSF002936">
    <property type="entry name" value="CysDAde_trans"/>
    <property type="match status" value="1"/>
</dbReference>
<dbReference type="SUPFAM" id="SSF52402">
    <property type="entry name" value="Adenine nucleotide alpha hydrolases-like"/>
    <property type="match status" value="1"/>
</dbReference>
<evidence type="ECO:0000255" key="1">
    <source>
        <dbReference type="HAMAP-Rule" id="MF_00064"/>
    </source>
</evidence>
<proteinExistence type="inferred from homology"/>
<name>CYSD2_ALKEH</name>
<gene>
    <name evidence="1" type="primary">cysD2</name>
    <name type="ordered locus">Mlg_2344</name>
</gene>
<reference key="1">
    <citation type="submission" date="2006-08" db="EMBL/GenBank/DDBJ databases">
        <title>Complete sequence of Alkalilimnicola ehrilichei MLHE-1.</title>
        <authorList>
            <person name="Copeland A."/>
            <person name="Lucas S."/>
            <person name="Lapidus A."/>
            <person name="Barry K."/>
            <person name="Detter J.C."/>
            <person name="Glavina del Rio T."/>
            <person name="Hammon N."/>
            <person name="Israni S."/>
            <person name="Dalin E."/>
            <person name="Tice H."/>
            <person name="Pitluck S."/>
            <person name="Sims D."/>
            <person name="Brettin T."/>
            <person name="Bruce D."/>
            <person name="Han C."/>
            <person name="Tapia R."/>
            <person name="Gilna P."/>
            <person name="Schmutz J."/>
            <person name="Larimer F."/>
            <person name="Land M."/>
            <person name="Hauser L."/>
            <person name="Kyrpides N."/>
            <person name="Mikhailova N."/>
            <person name="Oremland R.S."/>
            <person name="Hoeft S.E."/>
            <person name="Switzer-Blum J."/>
            <person name="Kulp T."/>
            <person name="King G."/>
            <person name="Tabita R."/>
            <person name="Witte B."/>
            <person name="Santini J.M."/>
            <person name="Basu P."/>
            <person name="Hollibaugh J.T."/>
            <person name="Xie G."/>
            <person name="Stolz J.F."/>
            <person name="Richardson P."/>
        </authorList>
    </citation>
    <scope>NUCLEOTIDE SEQUENCE [LARGE SCALE GENOMIC DNA]</scope>
    <source>
        <strain>ATCC BAA-1101 / DSM 17681 / MLHE-1</strain>
    </source>
</reference>
<feature type="chain" id="PRO_0000340176" description="Sulfate adenylyltransferase subunit 2 2">
    <location>
        <begin position="1"/>
        <end position="302"/>
    </location>
</feature>
<keyword id="KW-0067">ATP-binding</keyword>
<keyword id="KW-0547">Nucleotide-binding</keyword>
<keyword id="KW-0548">Nucleotidyltransferase</keyword>
<keyword id="KW-1185">Reference proteome</keyword>
<keyword id="KW-0808">Transferase</keyword>
<sequence length="302" mass="35141">MDNRTLTHLRQLEAESIHIIREVVAEFENPVMLYSIGKDSSVMLHLARKAFYPGTPPFPLMHVDTTWKFREMIEFRDRMAKEAGMELIVHINQEGVAQGIGPFSHGSRVHTDVMKTQSLKQALDKYRFDAAFGGARRDEERSRAKERVYSFRDRNHAWDPKNQRPELWRLYNGQVHKGESIRVFPLSNWTELDIWQYIYLEEIPIVPLYYAARRPVVERDGTLIMVDDDRMPLEPGEEPEMAMVRFRTLGCYPLTGAIRSEAATLPEIIQEMLLTKSSERQGRVIDHDAAGSMEEKKRQGYF</sequence>